<keyword id="KW-0067">ATP-binding</keyword>
<keyword id="KW-0418">Kinase</keyword>
<keyword id="KW-0547">Nucleotide-binding</keyword>
<keyword id="KW-1185">Reference proteome</keyword>
<keyword id="KW-0808">Transferase</keyword>
<sequence>MTNLDNNNLNEEIKNKLEKQQNQKEQKLIIVIMGVSGSGKTTIGNAIASSLGCGFNDADEFHSEENKEKMRSGIPLNDDDRKPWLSSINKRMIEFLNNENDGANDHVFTCSALKSTYRDQISNNINKDNLLFILLQGSKQLLSERLQNRKNHFFNPNLLDSQLSILELPTQSELSNHHYAFIDISNSVDEIVEEIFNYLK</sequence>
<protein>
    <recommendedName>
        <fullName>Probable gluconokinase</fullName>
        <ecNumber>2.7.1.12</ecNumber>
    </recommendedName>
    <alternativeName>
        <fullName>Gluconate kinase</fullName>
    </alternativeName>
</protein>
<reference key="1">
    <citation type="journal article" date="2005" name="Nature">
        <title>The genome of the social amoeba Dictyostelium discoideum.</title>
        <authorList>
            <person name="Eichinger L."/>
            <person name="Pachebat J.A."/>
            <person name="Gloeckner G."/>
            <person name="Rajandream M.A."/>
            <person name="Sucgang R."/>
            <person name="Berriman M."/>
            <person name="Song J."/>
            <person name="Olsen R."/>
            <person name="Szafranski K."/>
            <person name="Xu Q."/>
            <person name="Tunggal B."/>
            <person name="Kummerfeld S."/>
            <person name="Madera M."/>
            <person name="Konfortov B.A."/>
            <person name="Rivero F."/>
            <person name="Bankier A.T."/>
            <person name="Lehmann R."/>
            <person name="Hamlin N."/>
            <person name="Davies R."/>
            <person name="Gaudet P."/>
            <person name="Fey P."/>
            <person name="Pilcher K."/>
            <person name="Chen G."/>
            <person name="Saunders D."/>
            <person name="Sodergren E.J."/>
            <person name="Davis P."/>
            <person name="Kerhornou A."/>
            <person name="Nie X."/>
            <person name="Hall N."/>
            <person name="Anjard C."/>
            <person name="Hemphill L."/>
            <person name="Bason N."/>
            <person name="Farbrother P."/>
            <person name="Desany B."/>
            <person name="Just E."/>
            <person name="Morio T."/>
            <person name="Rost R."/>
            <person name="Churcher C.M."/>
            <person name="Cooper J."/>
            <person name="Haydock S."/>
            <person name="van Driessche N."/>
            <person name="Cronin A."/>
            <person name="Goodhead I."/>
            <person name="Muzny D.M."/>
            <person name="Mourier T."/>
            <person name="Pain A."/>
            <person name="Lu M."/>
            <person name="Harper D."/>
            <person name="Lindsay R."/>
            <person name="Hauser H."/>
            <person name="James K.D."/>
            <person name="Quiles M."/>
            <person name="Madan Babu M."/>
            <person name="Saito T."/>
            <person name="Buchrieser C."/>
            <person name="Wardroper A."/>
            <person name="Felder M."/>
            <person name="Thangavelu M."/>
            <person name="Johnson D."/>
            <person name="Knights A."/>
            <person name="Loulseged H."/>
            <person name="Mungall K.L."/>
            <person name="Oliver K."/>
            <person name="Price C."/>
            <person name="Quail M.A."/>
            <person name="Urushihara H."/>
            <person name="Hernandez J."/>
            <person name="Rabbinowitsch E."/>
            <person name="Steffen D."/>
            <person name="Sanders M."/>
            <person name="Ma J."/>
            <person name="Kohara Y."/>
            <person name="Sharp S."/>
            <person name="Simmonds M.N."/>
            <person name="Spiegler S."/>
            <person name="Tivey A."/>
            <person name="Sugano S."/>
            <person name="White B."/>
            <person name="Walker D."/>
            <person name="Woodward J.R."/>
            <person name="Winckler T."/>
            <person name="Tanaka Y."/>
            <person name="Shaulsky G."/>
            <person name="Schleicher M."/>
            <person name="Weinstock G.M."/>
            <person name="Rosenthal A."/>
            <person name="Cox E.C."/>
            <person name="Chisholm R.L."/>
            <person name="Gibbs R.A."/>
            <person name="Loomis W.F."/>
            <person name="Platzer M."/>
            <person name="Kay R.R."/>
            <person name="Williams J.G."/>
            <person name="Dear P.H."/>
            <person name="Noegel A.A."/>
            <person name="Barrell B.G."/>
            <person name="Kuspa A."/>
        </authorList>
    </citation>
    <scope>NUCLEOTIDE SEQUENCE [LARGE SCALE GENOMIC DNA]</scope>
    <source>
        <strain>AX4</strain>
    </source>
</reference>
<evidence type="ECO:0000255" key="1"/>
<evidence type="ECO:0000305" key="2"/>
<name>GNTK_DICDI</name>
<accession>Q54PI5</accession>
<organism>
    <name type="scientific">Dictyostelium discoideum</name>
    <name type="common">Social amoeba</name>
    <dbReference type="NCBI Taxonomy" id="44689"/>
    <lineage>
        <taxon>Eukaryota</taxon>
        <taxon>Amoebozoa</taxon>
        <taxon>Evosea</taxon>
        <taxon>Eumycetozoa</taxon>
        <taxon>Dictyostelia</taxon>
        <taxon>Dictyosteliales</taxon>
        <taxon>Dictyosteliaceae</taxon>
        <taxon>Dictyostelium</taxon>
    </lineage>
</organism>
<gene>
    <name type="ORF">DDB_G0284557</name>
</gene>
<dbReference type="EC" id="2.7.1.12"/>
<dbReference type="EMBL" id="AAFI02000066">
    <property type="protein sequence ID" value="EAL65205.1"/>
    <property type="molecule type" value="Genomic_DNA"/>
</dbReference>
<dbReference type="RefSeq" id="XP_638547.1">
    <property type="nucleotide sequence ID" value="XM_633455.1"/>
</dbReference>
<dbReference type="SMR" id="Q54PI5"/>
<dbReference type="FunCoup" id="Q54PI5">
    <property type="interactions" value="106"/>
</dbReference>
<dbReference type="STRING" id="44689.Q54PI5"/>
<dbReference type="PaxDb" id="44689-DDB0231437"/>
<dbReference type="EnsemblProtists" id="EAL65205">
    <property type="protein sequence ID" value="EAL65205"/>
    <property type="gene ID" value="DDB_G0284557"/>
</dbReference>
<dbReference type="GeneID" id="8624640"/>
<dbReference type="KEGG" id="ddi:DDB_G0284557"/>
<dbReference type="dictyBase" id="DDB_G0284557"/>
<dbReference type="VEuPathDB" id="AmoebaDB:DDB_G0284557"/>
<dbReference type="eggNOG" id="KOG3354">
    <property type="taxonomic scope" value="Eukaryota"/>
</dbReference>
<dbReference type="HOGENOM" id="CLU_077168_4_0_1"/>
<dbReference type="InParanoid" id="Q54PI5"/>
<dbReference type="OMA" id="YEGDDYH"/>
<dbReference type="PhylomeDB" id="Q54PI5"/>
<dbReference type="UniPathway" id="UPA00792"/>
<dbReference type="PRO" id="PR:Q54PI5"/>
<dbReference type="Proteomes" id="UP000002195">
    <property type="component" value="Chromosome 4"/>
</dbReference>
<dbReference type="GO" id="GO:0005524">
    <property type="term" value="F:ATP binding"/>
    <property type="evidence" value="ECO:0007669"/>
    <property type="project" value="UniProtKB-KW"/>
</dbReference>
<dbReference type="GO" id="GO:0046316">
    <property type="term" value="F:gluconokinase activity"/>
    <property type="evidence" value="ECO:0000318"/>
    <property type="project" value="GO_Central"/>
</dbReference>
<dbReference type="GO" id="GO:0005975">
    <property type="term" value="P:carbohydrate metabolic process"/>
    <property type="evidence" value="ECO:0007669"/>
    <property type="project" value="InterPro"/>
</dbReference>
<dbReference type="CDD" id="cd02021">
    <property type="entry name" value="GntK"/>
    <property type="match status" value="1"/>
</dbReference>
<dbReference type="FunFam" id="3.40.50.300:FF:004303">
    <property type="entry name" value="Probable gluconokinase"/>
    <property type="match status" value="1"/>
</dbReference>
<dbReference type="Gene3D" id="3.40.50.300">
    <property type="entry name" value="P-loop containing nucleotide triphosphate hydrolases"/>
    <property type="match status" value="1"/>
</dbReference>
<dbReference type="InterPro" id="IPR027417">
    <property type="entry name" value="P-loop_NTPase"/>
</dbReference>
<dbReference type="InterPro" id="IPR031322">
    <property type="entry name" value="Shikimate/glucono_kinase"/>
</dbReference>
<dbReference type="InterPro" id="IPR006001">
    <property type="entry name" value="Therm_gnt_kin"/>
</dbReference>
<dbReference type="NCBIfam" id="TIGR01313">
    <property type="entry name" value="therm_gnt_kin"/>
    <property type="match status" value="1"/>
</dbReference>
<dbReference type="PANTHER" id="PTHR43442">
    <property type="entry name" value="GLUCONOKINASE-RELATED"/>
    <property type="match status" value="1"/>
</dbReference>
<dbReference type="PANTHER" id="PTHR43442:SF3">
    <property type="entry name" value="GLUCONOKINASE-RELATED"/>
    <property type="match status" value="1"/>
</dbReference>
<dbReference type="Pfam" id="PF01202">
    <property type="entry name" value="SKI"/>
    <property type="match status" value="1"/>
</dbReference>
<dbReference type="SUPFAM" id="SSF52540">
    <property type="entry name" value="P-loop containing nucleoside triphosphate hydrolases"/>
    <property type="match status" value="1"/>
</dbReference>
<comment type="catalytic activity">
    <reaction>
        <text>D-gluconate + ATP = 6-phospho-D-gluconate + ADP + H(+)</text>
        <dbReference type="Rhea" id="RHEA:19433"/>
        <dbReference type="ChEBI" id="CHEBI:15378"/>
        <dbReference type="ChEBI" id="CHEBI:18391"/>
        <dbReference type="ChEBI" id="CHEBI:30616"/>
        <dbReference type="ChEBI" id="CHEBI:58759"/>
        <dbReference type="ChEBI" id="CHEBI:456216"/>
        <dbReference type="EC" id="2.7.1.12"/>
    </reaction>
</comment>
<comment type="pathway">
    <text>Carbohydrate acid metabolism; D-gluconate degradation.</text>
</comment>
<comment type="similarity">
    <text evidence="2">Belongs to the gluconokinase GntK/GntV family.</text>
</comment>
<proteinExistence type="inferred from homology"/>
<feature type="chain" id="PRO_0000327374" description="Probable gluconokinase">
    <location>
        <begin position="1"/>
        <end position="200"/>
    </location>
</feature>
<feature type="binding site" evidence="1">
    <location>
        <begin position="34"/>
        <end position="41"/>
    </location>
    <ligand>
        <name>ATP</name>
        <dbReference type="ChEBI" id="CHEBI:30616"/>
    </ligand>
</feature>